<gene>
    <name evidence="1" type="primary">proS</name>
    <name type="ordered locus">TP_0160</name>
</gene>
<accession>O83195</accession>
<name>SYP_TREPA</name>
<dbReference type="EC" id="6.1.1.15" evidence="1"/>
<dbReference type="EMBL" id="AE000520">
    <property type="protein sequence ID" value="AAC65149.1"/>
    <property type="molecule type" value="Genomic_DNA"/>
</dbReference>
<dbReference type="PIR" id="F71359">
    <property type="entry name" value="F71359"/>
</dbReference>
<dbReference type="SMR" id="O83195"/>
<dbReference type="IntAct" id="O83195">
    <property type="interactions" value="15"/>
</dbReference>
<dbReference type="STRING" id="243276.TP_0160"/>
<dbReference type="EnsemblBacteria" id="AAC65149">
    <property type="protein sequence ID" value="AAC65149"/>
    <property type="gene ID" value="TP_0160"/>
</dbReference>
<dbReference type="KEGG" id="tpa:TP_0160"/>
<dbReference type="KEGG" id="tpw:TPANIC_0160"/>
<dbReference type="eggNOG" id="COG0442">
    <property type="taxonomic scope" value="Bacteria"/>
</dbReference>
<dbReference type="HOGENOM" id="CLU_016739_0_0_12"/>
<dbReference type="OrthoDB" id="9809052at2"/>
<dbReference type="Proteomes" id="UP000000811">
    <property type="component" value="Chromosome"/>
</dbReference>
<dbReference type="GO" id="GO:0005829">
    <property type="term" value="C:cytosol"/>
    <property type="evidence" value="ECO:0007669"/>
    <property type="project" value="TreeGrafter"/>
</dbReference>
<dbReference type="GO" id="GO:0002161">
    <property type="term" value="F:aminoacyl-tRNA deacylase activity"/>
    <property type="evidence" value="ECO:0007669"/>
    <property type="project" value="InterPro"/>
</dbReference>
<dbReference type="GO" id="GO:0005524">
    <property type="term" value="F:ATP binding"/>
    <property type="evidence" value="ECO:0007669"/>
    <property type="project" value="UniProtKB-UniRule"/>
</dbReference>
<dbReference type="GO" id="GO:0004827">
    <property type="term" value="F:proline-tRNA ligase activity"/>
    <property type="evidence" value="ECO:0007669"/>
    <property type="project" value="UniProtKB-UniRule"/>
</dbReference>
<dbReference type="GO" id="GO:0006433">
    <property type="term" value="P:prolyl-tRNA aminoacylation"/>
    <property type="evidence" value="ECO:0007669"/>
    <property type="project" value="UniProtKB-UniRule"/>
</dbReference>
<dbReference type="CDD" id="cd04334">
    <property type="entry name" value="ProRS-INS"/>
    <property type="match status" value="1"/>
</dbReference>
<dbReference type="CDD" id="cd00861">
    <property type="entry name" value="ProRS_anticodon_short"/>
    <property type="match status" value="1"/>
</dbReference>
<dbReference type="CDD" id="cd00779">
    <property type="entry name" value="ProRS_core_prok"/>
    <property type="match status" value="1"/>
</dbReference>
<dbReference type="Gene3D" id="3.40.50.800">
    <property type="entry name" value="Anticodon-binding domain"/>
    <property type="match status" value="1"/>
</dbReference>
<dbReference type="Gene3D" id="3.30.930.10">
    <property type="entry name" value="Bira Bifunctional Protein, Domain 2"/>
    <property type="match status" value="2"/>
</dbReference>
<dbReference type="Gene3D" id="3.90.960.10">
    <property type="entry name" value="YbaK/aminoacyl-tRNA synthetase-associated domain"/>
    <property type="match status" value="1"/>
</dbReference>
<dbReference type="HAMAP" id="MF_01569">
    <property type="entry name" value="Pro_tRNA_synth_type1"/>
    <property type="match status" value="1"/>
</dbReference>
<dbReference type="InterPro" id="IPR002314">
    <property type="entry name" value="aa-tRNA-synt_IIb"/>
</dbReference>
<dbReference type="InterPro" id="IPR006195">
    <property type="entry name" value="aa-tRNA-synth_II"/>
</dbReference>
<dbReference type="InterPro" id="IPR045864">
    <property type="entry name" value="aa-tRNA-synth_II/BPL/LPL"/>
</dbReference>
<dbReference type="InterPro" id="IPR004154">
    <property type="entry name" value="Anticodon-bd"/>
</dbReference>
<dbReference type="InterPro" id="IPR036621">
    <property type="entry name" value="Anticodon-bd_dom_sf"/>
</dbReference>
<dbReference type="InterPro" id="IPR002316">
    <property type="entry name" value="Pro-tRNA-ligase_IIa"/>
</dbReference>
<dbReference type="InterPro" id="IPR004500">
    <property type="entry name" value="Pro-tRNA-synth_IIa_bac-type"/>
</dbReference>
<dbReference type="InterPro" id="IPR023717">
    <property type="entry name" value="Pro-tRNA-Synthase_IIa_type1"/>
</dbReference>
<dbReference type="InterPro" id="IPR050062">
    <property type="entry name" value="Pro-tRNA_synthetase"/>
</dbReference>
<dbReference type="InterPro" id="IPR044140">
    <property type="entry name" value="ProRS_anticodon_short"/>
</dbReference>
<dbReference type="InterPro" id="IPR033730">
    <property type="entry name" value="ProRS_core_prok"/>
</dbReference>
<dbReference type="InterPro" id="IPR036754">
    <property type="entry name" value="YbaK/aa-tRNA-synt-asso_dom_sf"/>
</dbReference>
<dbReference type="InterPro" id="IPR007214">
    <property type="entry name" value="YbaK/aa-tRNA-synth-assoc-dom"/>
</dbReference>
<dbReference type="NCBIfam" id="NF006625">
    <property type="entry name" value="PRK09194.1"/>
    <property type="match status" value="1"/>
</dbReference>
<dbReference type="NCBIfam" id="TIGR00409">
    <property type="entry name" value="proS_fam_II"/>
    <property type="match status" value="1"/>
</dbReference>
<dbReference type="PANTHER" id="PTHR42753">
    <property type="entry name" value="MITOCHONDRIAL RIBOSOME PROTEIN L39/PROLYL-TRNA LIGASE FAMILY MEMBER"/>
    <property type="match status" value="1"/>
</dbReference>
<dbReference type="PANTHER" id="PTHR42753:SF2">
    <property type="entry name" value="PROLINE--TRNA LIGASE"/>
    <property type="match status" value="1"/>
</dbReference>
<dbReference type="Pfam" id="PF03129">
    <property type="entry name" value="HGTP_anticodon"/>
    <property type="match status" value="1"/>
</dbReference>
<dbReference type="Pfam" id="PF00587">
    <property type="entry name" value="tRNA-synt_2b"/>
    <property type="match status" value="1"/>
</dbReference>
<dbReference type="Pfam" id="PF04073">
    <property type="entry name" value="tRNA_edit"/>
    <property type="match status" value="1"/>
</dbReference>
<dbReference type="PRINTS" id="PR01046">
    <property type="entry name" value="TRNASYNTHPRO"/>
</dbReference>
<dbReference type="SUPFAM" id="SSF52954">
    <property type="entry name" value="Class II aaRS ABD-related"/>
    <property type="match status" value="1"/>
</dbReference>
<dbReference type="SUPFAM" id="SSF55681">
    <property type="entry name" value="Class II aaRS and biotin synthetases"/>
    <property type="match status" value="1"/>
</dbReference>
<dbReference type="SUPFAM" id="SSF55826">
    <property type="entry name" value="YbaK/ProRS associated domain"/>
    <property type="match status" value="1"/>
</dbReference>
<dbReference type="PROSITE" id="PS50862">
    <property type="entry name" value="AA_TRNA_LIGASE_II"/>
    <property type="match status" value="1"/>
</dbReference>
<proteinExistence type="inferred from homology"/>
<keyword id="KW-0030">Aminoacyl-tRNA synthetase</keyword>
<keyword id="KW-0067">ATP-binding</keyword>
<keyword id="KW-0963">Cytoplasm</keyword>
<keyword id="KW-0436">Ligase</keyword>
<keyword id="KW-0547">Nucleotide-binding</keyword>
<keyword id="KW-0648">Protein biosynthesis</keyword>
<keyword id="KW-1185">Reference proteome</keyword>
<feature type="chain" id="PRO_0000139348" description="Proline--tRNA ligase">
    <location>
        <begin position="1"/>
        <end position="617"/>
    </location>
</feature>
<comment type="function">
    <text evidence="1">Catalyzes the attachment of proline to tRNA(Pro) in a two-step reaction: proline is first activated by ATP to form Pro-AMP and then transferred to the acceptor end of tRNA(Pro). As ProRS can inadvertently accommodate and process non-cognate amino acids such as alanine and cysteine, to avoid such errors it has two additional distinct editing activities against alanine. One activity is designated as 'pretransfer' editing and involves the tRNA(Pro)-independent hydrolysis of activated Ala-AMP. The other activity is designated 'posttransfer' editing and involves deacylation of mischarged Ala-tRNA(Pro). The misacylated Cys-tRNA(Pro) is not edited by ProRS.</text>
</comment>
<comment type="catalytic activity">
    <reaction evidence="1">
        <text>tRNA(Pro) + L-proline + ATP = L-prolyl-tRNA(Pro) + AMP + diphosphate</text>
        <dbReference type="Rhea" id="RHEA:14305"/>
        <dbReference type="Rhea" id="RHEA-COMP:9700"/>
        <dbReference type="Rhea" id="RHEA-COMP:9702"/>
        <dbReference type="ChEBI" id="CHEBI:30616"/>
        <dbReference type="ChEBI" id="CHEBI:33019"/>
        <dbReference type="ChEBI" id="CHEBI:60039"/>
        <dbReference type="ChEBI" id="CHEBI:78442"/>
        <dbReference type="ChEBI" id="CHEBI:78532"/>
        <dbReference type="ChEBI" id="CHEBI:456215"/>
        <dbReference type="EC" id="6.1.1.15"/>
    </reaction>
</comment>
<comment type="subunit">
    <text evidence="1">Homodimer.</text>
</comment>
<comment type="subcellular location">
    <subcellularLocation>
        <location evidence="1">Cytoplasm</location>
    </subcellularLocation>
</comment>
<comment type="domain">
    <text evidence="1">Consists of three domains: the N-terminal catalytic domain, the editing domain and the C-terminal anticodon-binding domain.</text>
</comment>
<comment type="similarity">
    <text evidence="1">Belongs to the class-II aminoacyl-tRNA synthetase family. ProS type 1 subfamily.</text>
</comment>
<evidence type="ECO:0000255" key="1">
    <source>
        <dbReference type="HAMAP-Rule" id="MF_01569"/>
    </source>
</evidence>
<sequence length="617" mass="68193">MSAFFAPTLRSAPADATIASHQLLMRAGYVRKIANGLFAYLPLGLRVRHKIEAIIREELEAIGCLECTAPVVTPAELWKESGRWYRMGAELLRAKNRLDHELLFSPTAEESFTALVRGDCTSYKHFPLSLYQINAKYRDEIRPRYGLMRAREFTMADAYSFHTDCACLARTYEKFAHAYRAIFRRIGLSVIAVHAHLGAMGGQESEEFMVESAVGDNTLLLCPHCTYAANCEKAVGQRPLPDTHDTHLKDEHEGSDLKTPAAMREVHTPHVKTIEELEHFLHVPAHRCIKTLIYRIDTVPQAAGHFVAVCIRGDLELNESKLEALLRVPSVVLATEQEVYALSGTPVGFIGPVGLAQRAAAAYAARTPAFFPSAAEPASVTSDIPFFSLVADQSVMAMHNAITGALKVDTHLVQVEPGRDFVPDAVADLMLVRAGDRCIHCGAPLYEKKGNELGHLFKLGDKYTRSMHLTFTDEQGVRQFPLMGCYGIGLDRTLASVVENHHDTRGISWPLAISPYAVVLIPIPHTQAPYAAAEALYVQLRTRGVEVLFDDRAERPGVKFADADLIGIPLRVVLSAKTLPRVECTTRCGAHTYFFTQEEASEHIARLLEQLASPESS</sequence>
<protein>
    <recommendedName>
        <fullName evidence="1">Proline--tRNA ligase</fullName>
        <ecNumber evidence="1">6.1.1.15</ecNumber>
    </recommendedName>
    <alternativeName>
        <fullName evidence="1">Prolyl-tRNA synthetase</fullName>
        <shortName evidence="1">ProRS</shortName>
    </alternativeName>
</protein>
<reference key="1">
    <citation type="journal article" date="1998" name="Science">
        <title>Complete genome sequence of Treponema pallidum, the syphilis spirochete.</title>
        <authorList>
            <person name="Fraser C.M."/>
            <person name="Norris S.J."/>
            <person name="Weinstock G.M."/>
            <person name="White O."/>
            <person name="Sutton G.G."/>
            <person name="Dodson R.J."/>
            <person name="Gwinn M.L."/>
            <person name="Hickey E.K."/>
            <person name="Clayton R.A."/>
            <person name="Ketchum K.A."/>
            <person name="Sodergren E."/>
            <person name="Hardham J.M."/>
            <person name="McLeod M.P."/>
            <person name="Salzberg S.L."/>
            <person name="Peterson J.D."/>
            <person name="Khalak H.G."/>
            <person name="Richardson D.L."/>
            <person name="Howell J.K."/>
            <person name="Chidambaram M."/>
            <person name="Utterback T.R."/>
            <person name="McDonald L.A."/>
            <person name="Artiach P."/>
            <person name="Bowman C."/>
            <person name="Cotton M.D."/>
            <person name="Fujii C."/>
            <person name="Garland S.A."/>
            <person name="Hatch B."/>
            <person name="Horst K."/>
            <person name="Roberts K.M."/>
            <person name="Sandusky M."/>
            <person name="Weidman J.F."/>
            <person name="Smith H.O."/>
            <person name="Venter J.C."/>
        </authorList>
    </citation>
    <scope>NUCLEOTIDE SEQUENCE [LARGE SCALE GENOMIC DNA]</scope>
    <source>
        <strain>Nichols</strain>
    </source>
</reference>
<organism>
    <name type="scientific">Treponema pallidum (strain Nichols)</name>
    <dbReference type="NCBI Taxonomy" id="243276"/>
    <lineage>
        <taxon>Bacteria</taxon>
        <taxon>Pseudomonadati</taxon>
        <taxon>Spirochaetota</taxon>
        <taxon>Spirochaetia</taxon>
        <taxon>Spirochaetales</taxon>
        <taxon>Treponemataceae</taxon>
        <taxon>Treponema</taxon>
    </lineage>
</organism>